<accession>P66954</accession>
<accession>Q99TF0</accession>
<reference key="1">
    <citation type="journal article" date="2001" name="Lancet">
        <title>Whole genome sequencing of meticillin-resistant Staphylococcus aureus.</title>
        <authorList>
            <person name="Kuroda M."/>
            <person name="Ohta T."/>
            <person name="Uchiyama I."/>
            <person name="Baba T."/>
            <person name="Yuzawa H."/>
            <person name="Kobayashi I."/>
            <person name="Cui L."/>
            <person name="Oguchi A."/>
            <person name="Aoki K."/>
            <person name="Nagai Y."/>
            <person name="Lian J.-Q."/>
            <person name="Ito T."/>
            <person name="Kanamori M."/>
            <person name="Matsumaru H."/>
            <person name="Maruyama A."/>
            <person name="Murakami H."/>
            <person name="Hosoyama A."/>
            <person name="Mizutani-Ui Y."/>
            <person name="Takahashi N.K."/>
            <person name="Sawano T."/>
            <person name="Inoue R."/>
            <person name="Kaito C."/>
            <person name="Sekimizu K."/>
            <person name="Hirakawa H."/>
            <person name="Kuhara S."/>
            <person name="Goto S."/>
            <person name="Yabuzaki J."/>
            <person name="Kanehisa M."/>
            <person name="Yamashita A."/>
            <person name="Oshima K."/>
            <person name="Furuya K."/>
            <person name="Yoshino C."/>
            <person name="Shiba T."/>
            <person name="Hattori M."/>
            <person name="Ogasawara N."/>
            <person name="Hayashi H."/>
            <person name="Hiramatsu K."/>
        </authorList>
    </citation>
    <scope>NUCLEOTIDE SEQUENCE [LARGE SCALE GENOMIC DNA]</scope>
    <source>
        <strain>Mu50 / ATCC 700699</strain>
    </source>
</reference>
<evidence type="ECO:0000255" key="1">
    <source>
        <dbReference type="HAMAP-Rule" id="MF_00269"/>
    </source>
</evidence>
<comment type="function">
    <text evidence="1">Thiol-specific peroxidase that catalyzes the reduction of hydrogen peroxide and organic hydroperoxides to water and alcohols, respectively. Plays a role in cell protection against oxidative stress by detoxifying peroxides.</text>
</comment>
<comment type="catalytic activity">
    <reaction evidence="1">
        <text>a hydroperoxide + [thioredoxin]-dithiol = an alcohol + [thioredoxin]-disulfide + H2O</text>
        <dbReference type="Rhea" id="RHEA:62620"/>
        <dbReference type="Rhea" id="RHEA-COMP:10698"/>
        <dbReference type="Rhea" id="RHEA-COMP:10700"/>
        <dbReference type="ChEBI" id="CHEBI:15377"/>
        <dbReference type="ChEBI" id="CHEBI:29950"/>
        <dbReference type="ChEBI" id="CHEBI:30879"/>
        <dbReference type="ChEBI" id="CHEBI:35924"/>
        <dbReference type="ChEBI" id="CHEBI:50058"/>
        <dbReference type="EC" id="1.11.1.24"/>
    </reaction>
</comment>
<comment type="subunit">
    <text evidence="1">Homodimer.</text>
</comment>
<comment type="miscellaneous">
    <text evidence="1">The active site is a conserved redox-active cysteine residue, the peroxidatic cysteine (C(P)), which makes the nucleophilic attack on the peroxide substrate. The peroxide oxidizes the C(P)-SH to cysteine sulfenic acid (C(P)-SOH), which then reacts with another cysteine residue, the resolving cysteine (C(R)), to form a disulfide bridge. The disulfide is subsequently reduced by an appropriate electron donor to complete the catalytic cycle. In this atypical 2-Cys peroxiredoxin, C(R) is present in the same subunit to form an intramolecular disulfide. The disulfide is subsequently reduced by thioredoxin.</text>
</comment>
<comment type="similarity">
    <text evidence="1">Belongs to the peroxiredoxin family. Tpx subfamily.</text>
</comment>
<keyword id="KW-0049">Antioxidant</keyword>
<keyword id="KW-1015">Disulfide bond</keyword>
<keyword id="KW-0560">Oxidoreductase</keyword>
<keyword id="KW-0575">Peroxidase</keyword>
<keyword id="KW-0676">Redox-active center</keyword>
<dbReference type="EC" id="1.11.1.24" evidence="1"/>
<dbReference type="EMBL" id="BA000017">
    <property type="protein sequence ID" value="BAB57875.1"/>
    <property type="molecule type" value="Genomic_DNA"/>
</dbReference>
<dbReference type="RefSeq" id="WP_000136260.1">
    <property type="nucleotide sequence ID" value="NC_002758.2"/>
</dbReference>
<dbReference type="SMR" id="P66954"/>
<dbReference type="KEGG" id="sav:SAV1713"/>
<dbReference type="HOGENOM" id="CLU_042529_12_0_9"/>
<dbReference type="PhylomeDB" id="P66954"/>
<dbReference type="Proteomes" id="UP000002481">
    <property type="component" value="Chromosome"/>
</dbReference>
<dbReference type="GO" id="GO:0008379">
    <property type="term" value="F:thioredoxin peroxidase activity"/>
    <property type="evidence" value="ECO:0007669"/>
    <property type="project" value="UniProtKB-UniRule"/>
</dbReference>
<dbReference type="CDD" id="cd03014">
    <property type="entry name" value="PRX_Atyp2cys"/>
    <property type="match status" value="1"/>
</dbReference>
<dbReference type="Gene3D" id="3.40.30.10">
    <property type="entry name" value="Glutaredoxin"/>
    <property type="match status" value="1"/>
</dbReference>
<dbReference type="HAMAP" id="MF_00269">
    <property type="entry name" value="Tpx"/>
    <property type="match status" value="1"/>
</dbReference>
<dbReference type="InterPro" id="IPR013740">
    <property type="entry name" value="Redoxin"/>
</dbReference>
<dbReference type="InterPro" id="IPR036249">
    <property type="entry name" value="Thioredoxin-like_sf"/>
</dbReference>
<dbReference type="InterPro" id="IPR013766">
    <property type="entry name" value="Thioredoxin_domain"/>
</dbReference>
<dbReference type="InterPro" id="IPR002065">
    <property type="entry name" value="TPX"/>
</dbReference>
<dbReference type="InterPro" id="IPR018219">
    <property type="entry name" value="Tpx_CS"/>
</dbReference>
<dbReference type="InterPro" id="IPR050455">
    <property type="entry name" value="Tpx_Peroxidase_subfamily"/>
</dbReference>
<dbReference type="NCBIfam" id="NF001808">
    <property type="entry name" value="PRK00522.1"/>
    <property type="match status" value="1"/>
</dbReference>
<dbReference type="PANTHER" id="PTHR43110">
    <property type="entry name" value="THIOL PEROXIDASE"/>
    <property type="match status" value="1"/>
</dbReference>
<dbReference type="PANTHER" id="PTHR43110:SF1">
    <property type="entry name" value="THIOL PEROXIDASE"/>
    <property type="match status" value="1"/>
</dbReference>
<dbReference type="Pfam" id="PF08534">
    <property type="entry name" value="Redoxin"/>
    <property type="match status" value="1"/>
</dbReference>
<dbReference type="SUPFAM" id="SSF52833">
    <property type="entry name" value="Thioredoxin-like"/>
    <property type="match status" value="1"/>
</dbReference>
<dbReference type="PROSITE" id="PS51352">
    <property type="entry name" value="THIOREDOXIN_2"/>
    <property type="match status" value="1"/>
</dbReference>
<dbReference type="PROSITE" id="PS01265">
    <property type="entry name" value="TPX"/>
    <property type="match status" value="1"/>
</dbReference>
<proteinExistence type="inferred from homology"/>
<protein>
    <recommendedName>
        <fullName evidence="1">Thiol peroxidase</fullName>
        <shortName evidence="1">Tpx</shortName>
        <ecNumber evidence="1">1.11.1.24</ecNumber>
    </recommendedName>
    <alternativeName>
        <fullName evidence="1">Peroxiredoxin tpx</fullName>
        <shortName evidence="1">Prx</shortName>
    </alternativeName>
    <alternativeName>
        <fullName evidence="1">Thioredoxin peroxidase</fullName>
    </alternativeName>
    <alternativeName>
        <fullName evidence="1">Thioredoxin-dependent peroxiredoxin</fullName>
    </alternativeName>
</protein>
<gene>
    <name evidence="1" type="primary">tpx</name>
    <name type="ordered locus">SAV1713</name>
</gene>
<organism>
    <name type="scientific">Staphylococcus aureus (strain Mu50 / ATCC 700699)</name>
    <dbReference type="NCBI Taxonomy" id="158878"/>
    <lineage>
        <taxon>Bacteria</taxon>
        <taxon>Bacillati</taxon>
        <taxon>Bacillota</taxon>
        <taxon>Bacilli</taxon>
        <taxon>Bacillales</taxon>
        <taxon>Staphylococcaceae</taxon>
        <taxon>Staphylococcus</taxon>
    </lineage>
</organism>
<name>TPX_STAAM</name>
<feature type="chain" id="PRO_0000187899" description="Thiol peroxidase">
    <location>
        <begin position="1"/>
        <end position="164"/>
    </location>
</feature>
<feature type="domain" description="Thioredoxin" evidence="1">
    <location>
        <begin position="18"/>
        <end position="163"/>
    </location>
</feature>
<feature type="active site" description="Cysteine sulfenic acid (-SOH) intermediate" evidence="1">
    <location>
        <position position="60"/>
    </location>
</feature>
<feature type="disulfide bond" description="Redox-active" evidence="1">
    <location>
        <begin position="60"/>
        <end position="93"/>
    </location>
</feature>
<sequence length="164" mass="18047">MTEITFKGGPIHLKGQQINEGDFAPDFTVLDNDLNQVTLADYAGKKKLISVVPSIDTGVCDQQTRKFNSEASKEEGIVLTISADLPFAQKRWCASAGLDNVITLSDHRDLSFGENYGVVMEELRLLARAVFVLDVDNKVVYKEIVSEGTDFPDFDAALAAYKNI</sequence>